<dbReference type="EC" id="4.1.3.39" evidence="1"/>
<dbReference type="EMBL" id="EF151283">
    <property type="protein sequence ID" value="ABM79797.1"/>
    <property type="molecule type" value="Genomic_DNA"/>
</dbReference>
<dbReference type="SMR" id="A2TC45"/>
<dbReference type="STRING" id="13690.AX777_20485"/>
<dbReference type="GO" id="GO:0003852">
    <property type="term" value="F:2-isopropylmalate synthase activity"/>
    <property type="evidence" value="ECO:0007669"/>
    <property type="project" value="TreeGrafter"/>
</dbReference>
<dbReference type="GO" id="GO:0008701">
    <property type="term" value="F:4-hydroxy-2-oxovalerate aldolase activity"/>
    <property type="evidence" value="ECO:0007669"/>
    <property type="project" value="UniProtKB-UniRule"/>
</dbReference>
<dbReference type="GO" id="GO:0030145">
    <property type="term" value="F:manganese ion binding"/>
    <property type="evidence" value="ECO:0007669"/>
    <property type="project" value="UniProtKB-UniRule"/>
</dbReference>
<dbReference type="GO" id="GO:0009056">
    <property type="term" value="P:catabolic process"/>
    <property type="evidence" value="ECO:0007669"/>
    <property type="project" value="UniProtKB-KW"/>
</dbReference>
<dbReference type="GO" id="GO:0009098">
    <property type="term" value="P:L-leucine biosynthetic process"/>
    <property type="evidence" value="ECO:0007669"/>
    <property type="project" value="TreeGrafter"/>
</dbReference>
<dbReference type="CDD" id="cd07943">
    <property type="entry name" value="DRE_TIM_HOA"/>
    <property type="match status" value="1"/>
</dbReference>
<dbReference type="FunFam" id="1.10.8.60:FF:000042">
    <property type="entry name" value="4-hydroxy-2-oxovalerate aldolase"/>
    <property type="match status" value="1"/>
</dbReference>
<dbReference type="Gene3D" id="1.10.8.60">
    <property type="match status" value="1"/>
</dbReference>
<dbReference type="Gene3D" id="3.20.20.70">
    <property type="entry name" value="Aldolase class I"/>
    <property type="match status" value="1"/>
</dbReference>
<dbReference type="HAMAP" id="MF_01656">
    <property type="entry name" value="HOA"/>
    <property type="match status" value="1"/>
</dbReference>
<dbReference type="InterPro" id="IPR050073">
    <property type="entry name" value="2-IPM_HCS-like"/>
</dbReference>
<dbReference type="InterPro" id="IPR017629">
    <property type="entry name" value="4OH_2_O-val_aldolase"/>
</dbReference>
<dbReference type="InterPro" id="IPR013785">
    <property type="entry name" value="Aldolase_TIM"/>
</dbReference>
<dbReference type="InterPro" id="IPR012425">
    <property type="entry name" value="DmpG_comm"/>
</dbReference>
<dbReference type="InterPro" id="IPR035685">
    <property type="entry name" value="DRE_TIM_HOA"/>
</dbReference>
<dbReference type="InterPro" id="IPR000891">
    <property type="entry name" value="PYR_CT"/>
</dbReference>
<dbReference type="NCBIfam" id="TIGR03217">
    <property type="entry name" value="4OH_2_O_val_ald"/>
    <property type="match status" value="1"/>
</dbReference>
<dbReference type="NCBIfam" id="NF006049">
    <property type="entry name" value="PRK08195.1"/>
    <property type="match status" value="1"/>
</dbReference>
<dbReference type="PANTHER" id="PTHR10277:SF9">
    <property type="entry name" value="2-ISOPROPYLMALATE SYNTHASE 1, CHLOROPLASTIC-RELATED"/>
    <property type="match status" value="1"/>
</dbReference>
<dbReference type="PANTHER" id="PTHR10277">
    <property type="entry name" value="HOMOCITRATE SYNTHASE-RELATED"/>
    <property type="match status" value="1"/>
</dbReference>
<dbReference type="Pfam" id="PF07836">
    <property type="entry name" value="DmpG_comm"/>
    <property type="match status" value="1"/>
</dbReference>
<dbReference type="Pfam" id="PF00682">
    <property type="entry name" value="HMGL-like"/>
    <property type="match status" value="1"/>
</dbReference>
<dbReference type="SUPFAM" id="SSF51569">
    <property type="entry name" value="Aldolase"/>
    <property type="match status" value="1"/>
</dbReference>
<dbReference type="SUPFAM" id="SSF89000">
    <property type="entry name" value="post-HMGL domain-like"/>
    <property type="match status" value="1"/>
</dbReference>
<dbReference type="PROSITE" id="PS50991">
    <property type="entry name" value="PYR_CT"/>
    <property type="match status" value="1"/>
</dbReference>
<name>HOA_SPHYA</name>
<keyword id="KW-0058">Aromatic hydrocarbons catabolism</keyword>
<keyword id="KW-0456">Lyase</keyword>
<keyword id="KW-0464">Manganese</keyword>
<keyword id="KW-0479">Metal-binding</keyword>
<gene>
    <name type="primary">xylK</name>
</gene>
<sequence>MTFNPETGKLYIQDVTLRVGMHAILHMYGTESVRTIAKALDDAGVDAIEVSHGDGLNGTSFNYGFGAHTDWEWIEAAADVIKNAVLTTLLVPGIGTVEELRRAYALGVRSVRVATHCTEADVAKQHIGIARDLGMDVSGFLMMSHMIDAEALAQQALLMESYGAHCVYVTDSGGALDMDGVRDRLRAYDRVLKPETQRGIHAHHNLSLGVANSIVAAQEGAVRIDASLAGMGAGAGNAPLEVFVAAADRKGWNHGCDVMALMDAAEDIIRPLQDRPVRVDRETLSLGYAGVYSSFLRHAEKAAEQYGLDTREILIELGKRRMVGGQEDMIVDVALDLVSARAA</sequence>
<evidence type="ECO:0000255" key="1">
    <source>
        <dbReference type="HAMAP-Rule" id="MF_01656"/>
    </source>
</evidence>
<accession>A2TC45</accession>
<proteinExistence type="inferred from homology"/>
<protein>
    <recommendedName>
        <fullName evidence="1">4-hydroxy-2-oxovalerate aldolase</fullName>
        <shortName evidence="1">HOA</shortName>
        <ecNumber evidence="1">4.1.3.39</ecNumber>
    </recommendedName>
    <alternativeName>
        <fullName evidence="1">4-hydroxy-2-keto-pentanoic acid aldolase</fullName>
    </alternativeName>
    <alternativeName>
        <fullName evidence="1">4-hydroxy-2-oxopentanoate aldolase</fullName>
    </alternativeName>
</protein>
<reference key="1">
    <citation type="journal article" date="2007" name="J. Ind. Microbiol. Biotechnol.">
        <title>Identification, cloning, and characterization of a multicomponent biphenyl dioxygenase from Sphingobium yanoikuyae B1.</title>
        <authorList>
            <person name="Chadhain S.M."/>
            <person name="Moritz E.M."/>
            <person name="Kim E."/>
            <person name="Zylstra G.J."/>
        </authorList>
    </citation>
    <scope>NUCLEOTIDE SEQUENCE [GENOMIC DNA]</scope>
    <source>
        <strain>DSM 6900 / JCM 10274 / B1</strain>
    </source>
</reference>
<comment type="catalytic activity">
    <reaction evidence="1">
        <text>(S)-4-hydroxy-2-oxopentanoate = acetaldehyde + pyruvate</text>
        <dbReference type="Rhea" id="RHEA:22624"/>
        <dbReference type="ChEBI" id="CHEBI:15343"/>
        <dbReference type="ChEBI" id="CHEBI:15361"/>
        <dbReference type="ChEBI" id="CHEBI:73143"/>
        <dbReference type="EC" id="4.1.3.39"/>
    </reaction>
</comment>
<comment type="similarity">
    <text evidence="1">Belongs to the 4-hydroxy-2-oxovalerate aldolase family.</text>
</comment>
<feature type="chain" id="PRO_0000387922" description="4-hydroxy-2-oxovalerate aldolase">
    <location>
        <begin position="1"/>
        <end position="343"/>
    </location>
</feature>
<feature type="domain" description="Pyruvate carboxyltransferase" evidence="1">
    <location>
        <begin position="10"/>
        <end position="262"/>
    </location>
</feature>
<feature type="active site" description="Proton acceptor" evidence="1">
    <location>
        <position position="22"/>
    </location>
</feature>
<feature type="binding site" evidence="1">
    <location>
        <position position="172"/>
    </location>
    <ligand>
        <name>substrate</name>
    </ligand>
</feature>
<feature type="binding site" evidence="1">
    <location>
        <position position="201"/>
    </location>
    <ligand>
        <name>Mn(2+)</name>
        <dbReference type="ChEBI" id="CHEBI:29035"/>
    </ligand>
</feature>
<feature type="binding site" evidence="1">
    <location>
        <position position="201"/>
    </location>
    <ligand>
        <name>substrate</name>
    </ligand>
</feature>
<feature type="binding site" evidence="1">
    <location>
        <position position="203"/>
    </location>
    <ligand>
        <name>Mn(2+)</name>
        <dbReference type="ChEBI" id="CHEBI:29035"/>
    </ligand>
</feature>
<feature type="binding site" evidence="1">
    <location>
        <position position="292"/>
    </location>
    <ligand>
        <name>substrate</name>
    </ligand>
</feature>
<feature type="site" description="Transition state stabilizer" evidence="1">
    <location>
        <position position="18"/>
    </location>
</feature>
<organism>
    <name type="scientific">Sphingobium yanoikuyae</name>
    <name type="common">Sphingomonas yanoikuyae</name>
    <dbReference type="NCBI Taxonomy" id="13690"/>
    <lineage>
        <taxon>Bacteria</taxon>
        <taxon>Pseudomonadati</taxon>
        <taxon>Pseudomonadota</taxon>
        <taxon>Alphaproteobacteria</taxon>
        <taxon>Sphingomonadales</taxon>
        <taxon>Sphingomonadaceae</taxon>
        <taxon>Sphingobium</taxon>
    </lineage>
</organism>